<protein>
    <recommendedName>
        <fullName evidence="2">GATOR1 complex protein NPRL2</fullName>
    </recommendedName>
    <alternativeName>
        <fullName evidence="1">Nitrogen permease regulator 2-like protein</fullName>
        <shortName evidence="1">NPR2-like protein</shortName>
    </alternativeName>
</protein>
<accession>Q5E9U9</accession>
<accession>Q3MHG8</accession>
<keyword id="KW-0343">GTPase activation</keyword>
<keyword id="KW-1017">Isopeptide bond</keyword>
<keyword id="KW-0458">Lysosome</keyword>
<keyword id="KW-0472">Membrane</keyword>
<keyword id="KW-0488">Methylation</keyword>
<keyword id="KW-1185">Reference proteome</keyword>
<keyword id="KW-0043">Tumor suppressor</keyword>
<keyword id="KW-0832">Ubl conjugation</keyword>
<evidence type="ECO:0000250" key="1">
    <source>
        <dbReference type="UniProtKB" id="Q8WTW4"/>
    </source>
</evidence>
<evidence type="ECO:0000305" key="2"/>
<proteinExistence type="evidence at transcript level"/>
<gene>
    <name evidence="1" type="primary">NPRL2</name>
</gene>
<name>NPRL2_BOVIN</name>
<organism>
    <name type="scientific">Bos taurus</name>
    <name type="common">Bovine</name>
    <dbReference type="NCBI Taxonomy" id="9913"/>
    <lineage>
        <taxon>Eukaryota</taxon>
        <taxon>Metazoa</taxon>
        <taxon>Chordata</taxon>
        <taxon>Craniata</taxon>
        <taxon>Vertebrata</taxon>
        <taxon>Euteleostomi</taxon>
        <taxon>Mammalia</taxon>
        <taxon>Eutheria</taxon>
        <taxon>Laurasiatheria</taxon>
        <taxon>Artiodactyla</taxon>
        <taxon>Ruminantia</taxon>
        <taxon>Pecora</taxon>
        <taxon>Bovidae</taxon>
        <taxon>Bovinae</taxon>
        <taxon>Bos</taxon>
    </lineage>
</organism>
<dbReference type="EMBL" id="BT020810">
    <property type="protein sequence ID" value="AAX08827.1"/>
    <property type="molecule type" value="mRNA"/>
</dbReference>
<dbReference type="EMBL" id="BT020821">
    <property type="protein sequence ID" value="AAX08838.1"/>
    <property type="molecule type" value="mRNA"/>
</dbReference>
<dbReference type="EMBL" id="BC105243">
    <property type="protein sequence ID" value="AAI05244.1"/>
    <property type="molecule type" value="mRNA"/>
</dbReference>
<dbReference type="SMR" id="Q5E9U9"/>
<dbReference type="FunCoup" id="Q5E9U9">
    <property type="interactions" value="2575"/>
</dbReference>
<dbReference type="STRING" id="9913.ENSBTAP00000065594"/>
<dbReference type="PaxDb" id="9913-ENSBTAP00000025503"/>
<dbReference type="Ensembl" id="ENSBTAT00000025503.5">
    <property type="protein sequence ID" value="ENSBTAP00000025503.5"/>
    <property type="gene ID" value="ENSBTAG00000019161.5"/>
</dbReference>
<dbReference type="VGNC" id="VGNC:32214">
    <property type="gene designation" value="NPRL2"/>
</dbReference>
<dbReference type="eggNOG" id="KOG3789">
    <property type="taxonomic scope" value="Eukaryota"/>
</dbReference>
<dbReference type="GeneTree" id="ENSGT00390000001414"/>
<dbReference type="HOGENOM" id="CLU_014995_0_0_1"/>
<dbReference type="InParanoid" id="Q5E9U9"/>
<dbReference type="OrthoDB" id="338854at2759"/>
<dbReference type="TreeFam" id="TF106159"/>
<dbReference type="Proteomes" id="UP000009136">
    <property type="component" value="Chromosome 22"/>
</dbReference>
<dbReference type="GO" id="GO:1990130">
    <property type="term" value="C:GATOR1 complex"/>
    <property type="evidence" value="ECO:0000318"/>
    <property type="project" value="GO_Central"/>
</dbReference>
<dbReference type="GO" id="GO:0005765">
    <property type="term" value="C:lysosomal membrane"/>
    <property type="evidence" value="ECO:0000250"/>
    <property type="project" value="UniProtKB"/>
</dbReference>
<dbReference type="GO" id="GO:0005774">
    <property type="term" value="C:vacuolar membrane"/>
    <property type="evidence" value="ECO:0000318"/>
    <property type="project" value="GO_Central"/>
</dbReference>
<dbReference type="GO" id="GO:0005096">
    <property type="term" value="F:GTPase activator activity"/>
    <property type="evidence" value="ECO:0000250"/>
    <property type="project" value="UniProtKB"/>
</dbReference>
<dbReference type="GO" id="GO:0034198">
    <property type="term" value="P:cellular response to amino acid starvation"/>
    <property type="evidence" value="ECO:0000250"/>
    <property type="project" value="UniProtKB"/>
</dbReference>
<dbReference type="GO" id="GO:1904262">
    <property type="term" value="P:negative regulation of TORC1 signaling"/>
    <property type="evidence" value="ECO:0000250"/>
    <property type="project" value="UniProtKB"/>
</dbReference>
<dbReference type="GO" id="GO:0010508">
    <property type="term" value="P:positive regulation of autophagy"/>
    <property type="evidence" value="ECO:0000318"/>
    <property type="project" value="GO_Central"/>
</dbReference>
<dbReference type="InterPro" id="IPR009348">
    <property type="entry name" value="NPR2-like"/>
</dbReference>
<dbReference type="PANTHER" id="PTHR12991:SF10">
    <property type="entry name" value="GATOR COMPLEX PROTEIN NPRL2"/>
    <property type="match status" value="1"/>
</dbReference>
<dbReference type="PANTHER" id="PTHR12991">
    <property type="entry name" value="NITROGEN PERMEASE REGULATOR 2/TUMOR SUPPRESSOR CANDIDATE 4"/>
    <property type="match status" value="1"/>
</dbReference>
<dbReference type="Pfam" id="PF06218">
    <property type="entry name" value="NPR2"/>
    <property type="match status" value="1"/>
</dbReference>
<comment type="function">
    <text evidence="1">Catalytic component of the GATOR1 complex, a multiprotein complex that functions as an inhibitor of the amino acid-sensing branch of the mTORC1 pathway. In response to amino acid depletion, the GATOR1 complex has GTPase activating protein (GAP) activity and strongly increases GTP hydrolysis by RagA/RRAGA (or RagB/RRAGB) within heterodimeric Rag complexes, thereby turning them into their inactive GDP-bound form, releasing mTORC1 from lysosomal surface and inhibiting mTORC1 signaling. In the presence of abundant amino acids, the GATOR1 complex is ubiquitinated and inhibited by GATOR2. Within the GATOR1 complex, NPRL2 constitutes the catalytic subunit that mediates the GTPase activator activity and under methionine-sufficient conditions, the GTPase activator activity is inhibited by PRMT1 through methylation and consequently inducing timely mTORC1 activation.</text>
</comment>
<comment type="function">
    <text evidence="1">Suppresses Src-dependent tyrosine phosphorylation and activation of PDPK1 and its downstream signaling. Down-regulates PDPK1 kinase activity by interfering with tyrosine phosphorylation at 'Tyr-9', 'Tyr-373' and 'Tyr-376' residues. May act as a tumor suppressor. Suppresses cell growth and enhances sensitivity to various anticancer drugs.</text>
</comment>
<comment type="subunit">
    <text evidence="1">Within the GATOR complex, component of the GATOR1 subcomplex, made of DEPDC5, NPRL2 and NPRL3. GATOR1 mediates the strong interaction of the GATOR complex with small GTPases Rag (RagA/RRAGA, RagB/RRAGB, RagC/RRAGC and/or RagD/RRAGD) heterodimers. GATOR1 interacts with GPR155/LYCHOS; interaction takes place in presence of cholesterol and prevents interaction between GATOR1 and KICSTOR. Interacts with PDPK1.</text>
</comment>
<comment type="subcellular location">
    <subcellularLocation>
        <location evidence="1">Lysosome membrane</location>
    </subcellularLocation>
    <text evidence="1">Localization to lysosomes is mediated by the KICSTOR complex and is amino acid-independent.</text>
</comment>
<comment type="domain">
    <text evidence="1">The arginine finger is critical for the GTPase-activating mechanism.</text>
</comment>
<comment type="PTM">
    <text evidence="1">In the presence of abundant amino acids, ubiquitinated at Lys-158 and Lys-357 via 'Lys-6'-linked ubiquitination by the WDR24 component of the GATOR2 complex, thereby inhibiting the GATOR1 complex and promoting mTORC1 activation.</text>
</comment>
<comment type="PTM">
    <text evidence="1">Asymmetric dimethylation at Arg-78 by PRMT1 inhibits the GTPase activator activity of the GATOR1 complex and consequently inducing timely mTORC1 activation under methionine-sufficient conditions.</text>
</comment>
<comment type="similarity">
    <text evidence="2">Belongs to the NPR2 family.</text>
</comment>
<sequence length="380" mass="43636">MGSSCRIECIFFSEFHPTLGPKITYQVPEDFISRELFDTVQVYIITKPELQNKLITVTAMEKKLIGCPVCIEHKKYSRNALLFNLGFVCDAQAKTCALEPIVKKLAGYLTTLELESSFVSTEESKQKLVPIMTILLEELNASGRCTLPIDESNTIHLKVIEQRPDPPVAQEYDVPVFTKDKEDFFNSQWDLTTQQILPYIDGFRHVQKISAEADVELNLVRIAIQNLLYYGVVTLVSILQYSNVYCPTPKVQDLVDDKSLQEACLSYVTKEGHKRASLRDVFQLYCSLSPGTTVRDLIGRHPQQLQHVDERKLIQFGLMKNLIRRLQKYPVRVSRDERSHPARLYTGCHSYDEICCKTGMSYQELDERLENDPNIIICWK</sequence>
<feature type="chain" id="PRO_0000245018" description="GATOR1 complex protein NPRL2">
    <location>
        <begin position="1"/>
        <end position="380"/>
    </location>
</feature>
<feature type="region of interest" description="Interaction with PDPK1" evidence="1">
    <location>
        <begin position="1"/>
        <end position="133"/>
    </location>
</feature>
<feature type="binding site" evidence="1">
    <location>
        <position position="78"/>
    </location>
    <ligand>
        <name>GDP</name>
        <dbReference type="ChEBI" id="CHEBI:58189"/>
    </ligand>
</feature>
<feature type="site" description="Arginine finger" evidence="1">
    <location>
        <position position="124"/>
    </location>
</feature>
<feature type="modified residue" description="Asymmetric dimethylarginine" evidence="1">
    <location>
        <position position="78"/>
    </location>
</feature>
<feature type="cross-link" description="Glycyl lysine isopeptide (Lys-Gly) (interchain with G-Cter in ubiquitin)" evidence="1">
    <location>
        <position position="158"/>
    </location>
</feature>
<feature type="cross-link" description="Glycyl lysine isopeptide (Lys-Gly) (interchain with G-Cter in ubiquitin)" evidence="1">
    <location>
        <position position="357"/>
    </location>
</feature>
<feature type="sequence conflict" description="In Ref. 2; AAI05244." evidence="2" ref="2">
    <original>N</original>
    <variation>D</variation>
    <location>
        <position position="226"/>
    </location>
</feature>
<reference key="1">
    <citation type="journal article" date="2005" name="BMC Genomics">
        <title>Characterization of 954 bovine full-CDS cDNA sequences.</title>
        <authorList>
            <person name="Harhay G.P."/>
            <person name="Sonstegard T.S."/>
            <person name="Keele J.W."/>
            <person name="Heaton M.P."/>
            <person name="Clawson M.L."/>
            <person name="Snelling W.M."/>
            <person name="Wiedmann R.T."/>
            <person name="Van Tassell C.P."/>
            <person name="Smith T.P.L."/>
        </authorList>
    </citation>
    <scope>NUCLEOTIDE SEQUENCE [LARGE SCALE MRNA]</scope>
</reference>
<reference key="2">
    <citation type="submission" date="2005-09" db="EMBL/GenBank/DDBJ databases">
        <authorList>
            <consortium name="NIH - Mammalian Gene Collection (MGC) project"/>
        </authorList>
    </citation>
    <scope>NUCLEOTIDE SEQUENCE [LARGE SCALE MRNA]</scope>
    <source>
        <strain>Hereford</strain>
        <tissue>Fetal liver</tissue>
    </source>
</reference>